<keyword id="KW-0150">Chloroplast</keyword>
<keyword id="KW-0472">Membrane</keyword>
<keyword id="KW-0602">Photosynthesis</keyword>
<keyword id="KW-0604">Photosystem II</keyword>
<keyword id="KW-0934">Plastid</keyword>
<keyword id="KW-0674">Reaction center</keyword>
<keyword id="KW-0793">Thylakoid</keyword>
<keyword id="KW-0812">Transmembrane</keyword>
<keyword id="KW-1133">Transmembrane helix</keyword>
<name>PSBL_STIHE</name>
<reference key="1">
    <citation type="journal article" date="2006" name="Mol. Genet. Genomics">
        <title>Distinctive architecture of the chloroplast genome in the chlorophycean green alga Stigeoclonium helveticum.</title>
        <authorList>
            <person name="Belanger A.-S."/>
            <person name="Brouard J.-S."/>
            <person name="Charlebois P."/>
            <person name="Otis C."/>
            <person name="Lemieux C."/>
            <person name="Turmel M."/>
        </authorList>
    </citation>
    <scope>NUCLEOTIDE SEQUENCE [LARGE SCALE GENOMIC DNA]</scope>
    <source>
        <strain>UTEX 441</strain>
    </source>
</reference>
<gene>
    <name evidence="1" type="primary">psbL</name>
</gene>
<feature type="chain" id="PRO_0000276225" description="Photosystem II reaction center protein L">
    <location>
        <begin position="1"/>
        <end position="54"/>
    </location>
</feature>
<feature type="transmembrane region" description="Helical" evidence="1">
    <location>
        <begin position="33"/>
        <end position="53"/>
    </location>
</feature>
<comment type="function">
    <text evidence="1">One of the components of the core complex of photosystem II (PSII). PSII is a light-driven water:plastoquinone oxidoreductase that uses light energy to abstract electrons from H(2)O, generating O(2) and a proton gradient subsequently used for ATP formation. It consists of a core antenna complex that captures photons, and an electron transfer chain that converts photonic excitation into a charge separation. This subunit is found at the monomer-monomer interface and is required for correct PSII assembly and/or dimerization.</text>
</comment>
<comment type="subunit">
    <text evidence="1">PSII is composed of 1 copy each of membrane proteins PsbA, PsbB, PsbC, PsbD, PsbE, PsbF, PsbH, PsbI, PsbJ, PsbK, PsbL, PsbM, PsbT, PsbX, PsbY, PsbZ, Psb30/Ycf12, at least 3 peripheral proteins of the oxygen-evolving complex and a large number of cofactors. It forms dimeric complexes.</text>
</comment>
<comment type="subcellular location">
    <subcellularLocation>
        <location evidence="1">Plastid</location>
        <location evidence="1">Chloroplast thylakoid membrane</location>
        <topology evidence="1">Single-pass membrane protein</topology>
    </subcellularLocation>
</comment>
<comment type="similarity">
    <text evidence="1">Belongs to the PsbL family.</text>
</comment>
<accession>Q06SD4</accession>
<dbReference type="EMBL" id="DQ630521">
    <property type="protein sequence ID" value="ABF60176.1"/>
    <property type="molecule type" value="Genomic_DNA"/>
</dbReference>
<dbReference type="RefSeq" id="YP_764432.1">
    <property type="nucleotide sequence ID" value="NC_008372.1"/>
</dbReference>
<dbReference type="SMR" id="Q06SD4"/>
<dbReference type="GeneID" id="4308419"/>
<dbReference type="GO" id="GO:0009535">
    <property type="term" value="C:chloroplast thylakoid membrane"/>
    <property type="evidence" value="ECO:0007669"/>
    <property type="project" value="UniProtKB-SubCell"/>
</dbReference>
<dbReference type="GO" id="GO:0009539">
    <property type="term" value="C:photosystem II reaction center"/>
    <property type="evidence" value="ECO:0007669"/>
    <property type="project" value="InterPro"/>
</dbReference>
<dbReference type="GO" id="GO:0015979">
    <property type="term" value="P:photosynthesis"/>
    <property type="evidence" value="ECO:0007669"/>
    <property type="project" value="UniProtKB-UniRule"/>
</dbReference>
<dbReference type="HAMAP" id="MF_01317">
    <property type="entry name" value="PSII_PsbL"/>
    <property type="match status" value="1"/>
</dbReference>
<dbReference type="InterPro" id="IPR003372">
    <property type="entry name" value="PSII_PsbL"/>
</dbReference>
<dbReference type="InterPro" id="IPR037266">
    <property type="entry name" value="PSII_PsbL_sf"/>
</dbReference>
<dbReference type="Pfam" id="PF02419">
    <property type="entry name" value="PsbL"/>
    <property type="match status" value="1"/>
</dbReference>
<dbReference type="SUPFAM" id="SSF161017">
    <property type="entry name" value="Photosystem II reaction center protein L, PsbL"/>
    <property type="match status" value="1"/>
</dbReference>
<organism>
    <name type="scientific">Stigeoclonium helveticum</name>
    <name type="common">Green alga</name>
    <dbReference type="NCBI Taxonomy" id="55999"/>
    <lineage>
        <taxon>Eukaryota</taxon>
        <taxon>Viridiplantae</taxon>
        <taxon>Chlorophyta</taxon>
        <taxon>core chlorophytes</taxon>
        <taxon>Chlorophyceae</taxon>
        <taxon>OCC clade</taxon>
        <taxon>Chaetophorales</taxon>
        <taxon>Chaetophoraceae</taxon>
        <taxon>Stigeoclonium</taxon>
    </lineage>
</organism>
<evidence type="ECO:0000255" key="1">
    <source>
        <dbReference type="HAMAP-Rule" id="MF_01317"/>
    </source>
</evidence>
<protein>
    <recommendedName>
        <fullName evidence="1">Photosystem II reaction center protein L</fullName>
        <shortName evidence="1">PSII-L</shortName>
    </recommendedName>
</protein>
<geneLocation type="chloroplast"/>
<sequence>MSQNEVDINIISLSEVVSRPNPNKQVVELNRTSLFWGLLLIFVLAVLFSSYIFN</sequence>
<proteinExistence type="inferred from homology"/>